<keyword id="KW-0002">3D-structure</keyword>
<keyword id="KW-0067">ATP-binding</keyword>
<keyword id="KW-0436">Ligase</keyword>
<keyword id="KW-0460">Magnesium</keyword>
<keyword id="KW-0479">Metal-binding</keyword>
<keyword id="KW-0520">NAD</keyword>
<keyword id="KW-0547">Nucleotide-binding</keyword>
<evidence type="ECO:0000255" key="1">
    <source>
        <dbReference type="HAMAP-Rule" id="MF_00193"/>
    </source>
</evidence>
<evidence type="ECO:0000305" key="2"/>
<evidence type="ECO:0007744" key="3">
    <source>
        <dbReference type="PDB" id="2E18"/>
    </source>
</evidence>
<evidence type="ECO:0007829" key="4">
    <source>
        <dbReference type="PDB" id="2E18"/>
    </source>
</evidence>
<feature type="chain" id="PRO_0000152232" description="NH(3)-dependent NAD(+) synthetase">
    <location>
        <begin position="1"/>
        <end position="257"/>
    </location>
</feature>
<feature type="binding site" evidence="1">
    <location>
        <begin position="28"/>
        <end position="35"/>
    </location>
    <ligand>
        <name>ATP</name>
        <dbReference type="ChEBI" id="CHEBI:30616"/>
    </ligand>
</feature>
<feature type="binding site" evidence="1">
    <location>
        <position position="34"/>
    </location>
    <ligand>
        <name>Mg(2+)</name>
        <dbReference type="ChEBI" id="CHEBI:18420"/>
    </ligand>
</feature>
<feature type="binding site" evidence="1">
    <location>
        <position position="109"/>
    </location>
    <ligand>
        <name>deamido-NAD(+)</name>
        <dbReference type="ChEBI" id="CHEBI:58437"/>
    </ligand>
</feature>
<feature type="binding site" evidence="1">
    <location>
        <position position="129"/>
    </location>
    <ligand>
        <name>ATP</name>
        <dbReference type="ChEBI" id="CHEBI:30616"/>
    </ligand>
</feature>
<feature type="binding site" evidence="1">
    <location>
        <position position="134"/>
    </location>
    <ligand>
        <name>Mg(2+)</name>
        <dbReference type="ChEBI" id="CHEBI:18420"/>
    </ligand>
</feature>
<feature type="binding site" evidence="1">
    <location>
        <position position="142"/>
    </location>
    <ligand>
        <name>deamido-NAD(+)</name>
        <dbReference type="ChEBI" id="CHEBI:58437"/>
    </ligand>
</feature>
<feature type="binding site" evidence="1">
    <location>
        <position position="149"/>
    </location>
    <ligand>
        <name>deamido-NAD(+)</name>
        <dbReference type="ChEBI" id="CHEBI:58437"/>
    </ligand>
</feature>
<feature type="binding site" evidence="1">
    <location>
        <position position="158"/>
    </location>
    <ligand>
        <name>ATP</name>
        <dbReference type="ChEBI" id="CHEBI:30616"/>
    </ligand>
</feature>
<feature type="binding site" evidence="1">
    <location>
        <position position="180"/>
    </location>
    <ligand>
        <name>ATP</name>
        <dbReference type="ChEBI" id="CHEBI:30616"/>
    </ligand>
</feature>
<feature type="binding site" evidence="1">
    <location>
        <begin position="240"/>
        <end position="241"/>
    </location>
    <ligand>
        <name>deamido-NAD(+)</name>
        <dbReference type="ChEBI" id="CHEBI:58437"/>
    </ligand>
</feature>
<feature type="helix" evidence="4">
    <location>
        <begin position="6"/>
        <end position="20"/>
    </location>
</feature>
<feature type="strand" evidence="4">
    <location>
        <begin position="25"/>
        <end position="28"/>
    </location>
</feature>
<feature type="helix" evidence="4">
    <location>
        <begin position="33"/>
        <end position="46"/>
    </location>
</feature>
<feature type="helix" evidence="4">
    <location>
        <begin position="48"/>
        <end position="50"/>
    </location>
</feature>
<feature type="strand" evidence="4">
    <location>
        <begin position="51"/>
        <end position="55"/>
    </location>
</feature>
<feature type="helix" evidence="4">
    <location>
        <begin position="63"/>
        <end position="74"/>
    </location>
</feature>
<feature type="strand" evidence="4">
    <location>
        <begin position="77"/>
        <end position="80"/>
    </location>
</feature>
<feature type="helix" evidence="4">
    <location>
        <begin position="84"/>
        <end position="94"/>
    </location>
</feature>
<feature type="helix" evidence="4">
    <location>
        <begin position="100"/>
        <end position="122"/>
    </location>
</feature>
<feature type="strand" evidence="4">
    <location>
        <begin position="125"/>
        <end position="127"/>
    </location>
</feature>
<feature type="helix" evidence="4">
    <location>
        <begin position="132"/>
        <end position="137"/>
    </location>
</feature>
<feature type="strand" evidence="4">
    <location>
        <begin position="148"/>
        <end position="150"/>
    </location>
</feature>
<feature type="turn" evidence="4">
    <location>
        <begin position="152"/>
        <end position="155"/>
    </location>
</feature>
<feature type="helix" evidence="4">
    <location>
        <begin position="158"/>
        <end position="168"/>
    </location>
</feature>
<feature type="helix" evidence="4">
    <location>
        <begin position="172"/>
        <end position="176"/>
    </location>
</feature>
<feature type="helix" evidence="4">
    <location>
        <begin position="189"/>
        <end position="193"/>
    </location>
</feature>
<feature type="helix" evidence="4">
    <location>
        <begin position="197"/>
        <end position="208"/>
    </location>
</feature>
<feature type="helix" evidence="4">
    <location>
        <begin position="214"/>
        <end position="219"/>
    </location>
</feature>
<feature type="turn" evidence="4">
    <location>
        <begin position="220"/>
        <end position="222"/>
    </location>
</feature>
<feature type="helix" evidence="4">
    <location>
        <begin position="225"/>
        <end position="236"/>
    </location>
</feature>
<feature type="helix" evidence="4">
    <location>
        <begin position="237"/>
        <end position="241"/>
    </location>
</feature>
<feature type="helix" evidence="4">
    <location>
        <begin position="251"/>
        <end position="253"/>
    </location>
</feature>
<dbReference type="EC" id="6.3.1.5" evidence="1"/>
<dbReference type="EMBL" id="BA000001">
    <property type="protein sequence ID" value="BAA29251.1"/>
    <property type="molecule type" value="Genomic_DNA"/>
</dbReference>
<dbReference type="PIR" id="D71240">
    <property type="entry name" value="D71240"/>
</dbReference>
<dbReference type="RefSeq" id="WP_010884291.1">
    <property type="nucleotide sequence ID" value="NC_000961.1"/>
</dbReference>
<dbReference type="PDB" id="2E18">
    <property type="method" value="X-ray"/>
    <property type="resolution" value="2.10 A"/>
    <property type="chains" value="A/B=1-257"/>
</dbReference>
<dbReference type="PDBsum" id="2E18"/>
<dbReference type="SMR" id="O57921"/>
<dbReference type="STRING" id="70601.gene:9377092"/>
<dbReference type="EnsemblBacteria" id="BAA29251">
    <property type="protein sequence ID" value="BAA29251"/>
    <property type="gene ID" value="BAA29251"/>
</dbReference>
<dbReference type="GeneID" id="1444073"/>
<dbReference type="KEGG" id="pho:PH0182"/>
<dbReference type="eggNOG" id="arCOG00069">
    <property type="taxonomic scope" value="Archaea"/>
</dbReference>
<dbReference type="OrthoDB" id="39312at2157"/>
<dbReference type="UniPathway" id="UPA00253">
    <property type="reaction ID" value="UER00333"/>
</dbReference>
<dbReference type="EvolutionaryTrace" id="O57921"/>
<dbReference type="Proteomes" id="UP000000752">
    <property type="component" value="Chromosome"/>
</dbReference>
<dbReference type="GO" id="GO:0005737">
    <property type="term" value="C:cytoplasm"/>
    <property type="evidence" value="ECO:0007669"/>
    <property type="project" value="InterPro"/>
</dbReference>
<dbReference type="GO" id="GO:0005524">
    <property type="term" value="F:ATP binding"/>
    <property type="evidence" value="ECO:0007669"/>
    <property type="project" value="UniProtKB-UniRule"/>
</dbReference>
<dbReference type="GO" id="GO:0003690">
    <property type="term" value="F:double-stranded DNA binding"/>
    <property type="evidence" value="ECO:0007669"/>
    <property type="project" value="InterPro"/>
</dbReference>
<dbReference type="GO" id="GO:0004359">
    <property type="term" value="F:glutaminase activity"/>
    <property type="evidence" value="ECO:0007669"/>
    <property type="project" value="InterPro"/>
</dbReference>
<dbReference type="GO" id="GO:0046872">
    <property type="term" value="F:metal ion binding"/>
    <property type="evidence" value="ECO:0007669"/>
    <property type="project" value="UniProtKB-KW"/>
</dbReference>
<dbReference type="GO" id="GO:0003952">
    <property type="term" value="F:NAD+ synthase (glutamine-hydrolyzing) activity"/>
    <property type="evidence" value="ECO:0007669"/>
    <property type="project" value="InterPro"/>
</dbReference>
<dbReference type="GO" id="GO:0008795">
    <property type="term" value="F:NAD+ synthase activity"/>
    <property type="evidence" value="ECO:0007669"/>
    <property type="project" value="UniProtKB-UniRule"/>
</dbReference>
<dbReference type="GO" id="GO:0006265">
    <property type="term" value="P:DNA topological change"/>
    <property type="evidence" value="ECO:0007669"/>
    <property type="project" value="InterPro"/>
</dbReference>
<dbReference type="GO" id="GO:0009435">
    <property type="term" value="P:NAD biosynthetic process"/>
    <property type="evidence" value="ECO:0007669"/>
    <property type="project" value="UniProtKB-UniRule"/>
</dbReference>
<dbReference type="CDD" id="cd00553">
    <property type="entry name" value="NAD_synthase"/>
    <property type="match status" value="1"/>
</dbReference>
<dbReference type="FunFam" id="3.40.50.620:FF:000106">
    <property type="entry name" value="Glutamine-dependent NAD(+) synthetase"/>
    <property type="match status" value="1"/>
</dbReference>
<dbReference type="Gene3D" id="3.40.50.620">
    <property type="entry name" value="HUPs"/>
    <property type="match status" value="1"/>
</dbReference>
<dbReference type="HAMAP" id="MF_00193">
    <property type="entry name" value="NadE_ammonia_dep"/>
    <property type="match status" value="1"/>
</dbReference>
<dbReference type="InterPro" id="IPR022310">
    <property type="entry name" value="NAD/GMP_synthase"/>
</dbReference>
<dbReference type="InterPro" id="IPR003694">
    <property type="entry name" value="NAD_synthase"/>
</dbReference>
<dbReference type="InterPro" id="IPR022926">
    <property type="entry name" value="NH(3)-dep_NAD(+)_synth"/>
</dbReference>
<dbReference type="InterPro" id="IPR014729">
    <property type="entry name" value="Rossmann-like_a/b/a_fold"/>
</dbReference>
<dbReference type="InterPro" id="IPR018126">
    <property type="entry name" value="SASP_alpha/beta-type_CS"/>
</dbReference>
<dbReference type="NCBIfam" id="TIGR00552">
    <property type="entry name" value="nadE"/>
    <property type="match status" value="1"/>
</dbReference>
<dbReference type="NCBIfam" id="NF010587">
    <property type="entry name" value="PRK13980.1"/>
    <property type="match status" value="1"/>
</dbReference>
<dbReference type="PANTHER" id="PTHR23090:SF9">
    <property type="entry name" value="GLUTAMINE-DEPENDENT NAD(+) SYNTHETASE"/>
    <property type="match status" value="1"/>
</dbReference>
<dbReference type="PANTHER" id="PTHR23090">
    <property type="entry name" value="NH 3 /GLUTAMINE-DEPENDENT NAD + SYNTHETASE"/>
    <property type="match status" value="1"/>
</dbReference>
<dbReference type="Pfam" id="PF02540">
    <property type="entry name" value="NAD_synthase"/>
    <property type="match status" value="1"/>
</dbReference>
<dbReference type="SUPFAM" id="SSF52402">
    <property type="entry name" value="Adenine nucleotide alpha hydrolases-like"/>
    <property type="match status" value="1"/>
</dbReference>
<organism>
    <name type="scientific">Pyrococcus horikoshii (strain ATCC 700860 / DSM 12428 / JCM 9974 / NBRC 100139 / OT-3)</name>
    <dbReference type="NCBI Taxonomy" id="70601"/>
    <lineage>
        <taxon>Archaea</taxon>
        <taxon>Methanobacteriati</taxon>
        <taxon>Methanobacteriota</taxon>
        <taxon>Thermococci</taxon>
        <taxon>Thermococcales</taxon>
        <taxon>Thermococcaceae</taxon>
        <taxon>Pyrococcus</taxon>
    </lineage>
</organism>
<protein>
    <recommendedName>
        <fullName evidence="1">NH(3)-dependent NAD(+) synthetase</fullName>
        <ecNumber evidence="1">6.3.1.5</ecNumber>
    </recommendedName>
</protein>
<reference key="1">
    <citation type="journal article" date="1998" name="DNA Res.">
        <title>Complete sequence and gene organization of the genome of a hyper-thermophilic archaebacterium, Pyrococcus horikoshii OT3.</title>
        <authorList>
            <person name="Kawarabayasi Y."/>
            <person name="Sawada M."/>
            <person name="Horikawa H."/>
            <person name="Haikawa Y."/>
            <person name="Hino Y."/>
            <person name="Yamamoto S."/>
            <person name="Sekine M."/>
            <person name="Baba S."/>
            <person name="Kosugi H."/>
            <person name="Hosoyama A."/>
            <person name="Nagai Y."/>
            <person name="Sakai M."/>
            <person name="Ogura K."/>
            <person name="Otsuka R."/>
            <person name="Nakazawa H."/>
            <person name="Takamiya M."/>
            <person name="Ohfuku Y."/>
            <person name="Funahashi T."/>
            <person name="Tanaka T."/>
            <person name="Kudoh Y."/>
            <person name="Yamazaki J."/>
            <person name="Kushida N."/>
            <person name="Oguchi A."/>
            <person name="Aoki K."/>
            <person name="Yoshizawa T."/>
            <person name="Nakamura Y."/>
            <person name="Robb F.T."/>
            <person name="Horikoshi K."/>
            <person name="Masuchi Y."/>
            <person name="Shizuya H."/>
            <person name="Kikuchi H."/>
        </authorList>
    </citation>
    <scope>NUCLEOTIDE SEQUENCE [LARGE SCALE GENOMIC DNA]</scope>
    <source>
        <strain>ATCC 700860 / DSM 12428 / JCM 9974 / NBRC 100139 / OT-3</strain>
    </source>
</reference>
<reference evidence="3" key="2">
    <citation type="submission" date="2006-10" db="PDB data bank">
        <title>Crystal structure of project PH0182 from Pyrococcus horikoshii OT3.</title>
        <authorList>
            <person name="Shimizu K."/>
            <person name="Kunishima N."/>
        </authorList>
    </citation>
    <scope>X-RAY CRYSTALLOGRAPHY (2.10 ANGSTROMS)</scope>
    <source>
        <strain>ATCC 700860 / DSM 12428 / JCM 9974 / NBRC 100139 / OT-3</strain>
    </source>
</reference>
<name>NADE_PYRHO</name>
<gene>
    <name evidence="1" type="primary">nadE</name>
    <name type="ordered locus">PH0182</name>
</gene>
<sequence>MRILDYDKVIERILEFIREKGNNGVVIGISGGVDSATVAYLATKALGKEKVLGLIMPYFENKDVEDAKLVAEKLGIGYKVINIKPIVDSFVENLELNLDRKGLGNIMSRTRMIMLYAHANSLGRIVLGTSNRSEFLTGYFTKWGDGASDYAPIINLYKTEVWEIAKRIGVPERIVKKKPSAGLWEGQTDEDELGISYNLLDEILWRMIDLKIGKEEIAKDLGIPLSLVERVEELIKKSEHKRRLPIGPSFEDLIVGP</sequence>
<proteinExistence type="evidence at protein level"/>
<accession>O57921</accession>
<comment type="function">
    <text evidence="1">Catalyzes the ATP-dependent amidation of deamido-NAD to form NAD. Uses ammonia as a nitrogen source.</text>
</comment>
<comment type="catalytic activity">
    <reaction evidence="1">
        <text>deamido-NAD(+) + NH4(+) + ATP = AMP + diphosphate + NAD(+) + H(+)</text>
        <dbReference type="Rhea" id="RHEA:21188"/>
        <dbReference type="ChEBI" id="CHEBI:15378"/>
        <dbReference type="ChEBI" id="CHEBI:28938"/>
        <dbReference type="ChEBI" id="CHEBI:30616"/>
        <dbReference type="ChEBI" id="CHEBI:33019"/>
        <dbReference type="ChEBI" id="CHEBI:57540"/>
        <dbReference type="ChEBI" id="CHEBI:58437"/>
        <dbReference type="ChEBI" id="CHEBI:456215"/>
        <dbReference type="EC" id="6.3.1.5"/>
    </reaction>
</comment>
<comment type="pathway">
    <text evidence="1">Cofactor biosynthesis; NAD(+) biosynthesis; NAD(+) from deamido-NAD(+) (ammonia route): step 1/1.</text>
</comment>
<comment type="subunit">
    <text evidence="1">Homodimer.</text>
</comment>
<comment type="similarity">
    <text evidence="1 2">Belongs to the NAD synthetase family.</text>
</comment>